<keyword id="KW-1003">Cell membrane</keyword>
<keyword id="KW-0966">Cell projection</keyword>
<keyword id="KW-1015">Disulfide bond</keyword>
<keyword id="KW-0297">G-protein coupled receptor</keyword>
<keyword id="KW-0325">Glycoprotein</keyword>
<keyword id="KW-0472">Membrane</keyword>
<keyword id="KW-0675">Receptor</keyword>
<keyword id="KW-1185">Reference proteome</keyword>
<keyword id="KW-0732">Signal</keyword>
<keyword id="KW-0770">Synapse</keyword>
<keyword id="KW-0807">Transducer</keyword>
<keyword id="KW-0812">Transmembrane</keyword>
<keyword id="KW-1133">Transmembrane helix</keyword>
<evidence type="ECO:0000250" key="1"/>
<evidence type="ECO:0000250" key="2">
    <source>
        <dbReference type="UniProtKB" id="Q14416"/>
    </source>
</evidence>
<evidence type="ECO:0000250" key="3">
    <source>
        <dbReference type="UniProtKB" id="Q14BI2"/>
    </source>
</evidence>
<evidence type="ECO:0000255" key="4"/>
<evidence type="ECO:0000305" key="5"/>
<protein>
    <recommendedName>
        <fullName>Metabotropic glutamate receptor 2</fullName>
        <shortName>mGluR2</shortName>
    </recommendedName>
</protein>
<accession>P31421</accession>
<gene>
    <name type="primary">Grm2</name>
    <name type="synonym">Gprc1b</name>
    <name type="synonym">Mglur2</name>
</gene>
<name>GRM2_RAT</name>
<reference key="1">
    <citation type="journal article" date="1992" name="Neuron">
        <title>A family of metabotropic glutamate receptors.</title>
        <authorList>
            <person name="Tanabe Y."/>
            <person name="Masu M."/>
            <person name="Ishii T."/>
            <person name="Shigemoto R."/>
            <person name="Nakanishi S."/>
        </authorList>
    </citation>
    <scope>NUCLEOTIDE SEQUENCE [MRNA]</scope>
    <source>
        <tissue>Brain</tissue>
    </source>
</reference>
<reference key="2">
    <citation type="journal article" date="2002" name="J. Neurosci.">
        <title>Tamalin, a PDZ domain-containing protein, links a protein complex formation of group 1 metabotropic glutamate receptors and the guanine nucleotide exchange factor cytohesins.</title>
        <authorList>
            <person name="Kitano J."/>
            <person name="Kimura K."/>
            <person name="Yamazaki Y."/>
            <person name="Soda T."/>
            <person name="Shigemoto R."/>
            <person name="Nakajima Y."/>
            <person name="Nakanishi S."/>
        </authorList>
    </citation>
    <scope>INTERACTION WITH TAMALIN</scope>
</reference>
<feature type="signal peptide" evidence="4">
    <location>
        <begin position="1"/>
        <end position="18"/>
    </location>
</feature>
<feature type="chain" id="PRO_0000012926" description="Metabotropic glutamate receptor 2">
    <location>
        <begin position="19"/>
        <end position="872"/>
    </location>
</feature>
<feature type="topological domain" description="Extracellular" evidence="4">
    <location>
        <begin position="19"/>
        <end position="567"/>
    </location>
</feature>
<feature type="transmembrane region" description="Helical; Name=1" evidence="4">
    <location>
        <begin position="568"/>
        <end position="590"/>
    </location>
</feature>
<feature type="topological domain" description="Cytoplasmic" evidence="4">
    <location>
        <begin position="591"/>
        <end position="604"/>
    </location>
</feature>
<feature type="transmembrane region" description="Helical; Name=2" evidence="4">
    <location>
        <begin position="605"/>
        <end position="625"/>
    </location>
</feature>
<feature type="topological domain" description="Extracellular" evidence="4">
    <location>
        <begin position="626"/>
        <end position="636"/>
    </location>
</feature>
<feature type="transmembrane region" description="Helical; Name=3" evidence="4">
    <location>
        <begin position="637"/>
        <end position="655"/>
    </location>
</feature>
<feature type="topological domain" description="Cytoplasmic" evidence="4">
    <location>
        <begin position="656"/>
        <end position="679"/>
    </location>
</feature>
<feature type="transmembrane region" description="Helical; Name=4" evidence="4">
    <location>
        <begin position="680"/>
        <end position="700"/>
    </location>
</feature>
<feature type="topological domain" description="Extracellular" evidence="4">
    <location>
        <begin position="701"/>
        <end position="725"/>
    </location>
</feature>
<feature type="transmembrane region" description="Helical; Name=5" evidence="4">
    <location>
        <begin position="726"/>
        <end position="747"/>
    </location>
</feature>
<feature type="topological domain" description="Cytoplasmic" evidence="4">
    <location>
        <begin position="748"/>
        <end position="760"/>
    </location>
</feature>
<feature type="transmembrane region" description="Helical; Name=6" evidence="4">
    <location>
        <begin position="761"/>
        <end position="783"/>
    </location>
</feature>
<feature type="topological domain" description="Extracellular" evidence="4">
    <location>
        <begin position="784"/>
        <end position="793"/>
    </location>
</feature>
<feature type="transmembrane region" description="Helical; Name=7" evidence="4">
    <location>
        <begin position="794"/>
        <end position="819"/>
    </location>
</feature>
<feature type="topological domain" description="Cytoplasmic" evidence="4">
    <location>
        <begin position="820"/>
        <end position="872"/>
    </location>
</feature>
<feature type="region of interest" description="Important for interaction with HTR2A" evidence="1">
    <location>
        <begin position="677"/>
        <end position="685"/>
    </location>
</feature>
<feature type="binding site" evidence="2">
    <location>
        <position position="57"/>
    </location>
    <ligand>
        <name>L-glutamate</name>
        <dbReference type="ChEBI" id="CHEBI:29985"/>
    </ligand>
</feature>
<feature type="binding site" evidence="2">
    <location>
        <position position="61"/>
    </location>
    <ligand>
        <name>L-glutamate</name>
        <dbReference type="ChEBI" id="CHEBI:29985"/>
    </ligand>
</feature>
<feature type="binding site" evidence="2">
    <location>
        <position position="145"/>
    </location>
    <ligand>
        <name>L-glutamate</name>
        <dbReference type="ChEBI" id="CHEBI:29985"/>
    </ligand>
</feature>
<feature type="binding site" evidence="2">
    <location>
        <position position="166"/>
    </location>
    <ligand>
        <name>L-glutamate</name>
        <dbReference type="ChEBI" id="CHEBI:29985"/>
    </ligand>
</feature>
<feature type="binding site" evidence="2">
    <location>
        <position position="168"/>
    </location>
    <ligand>
        <name>L-glutamate</name>
        <dbReference type="ChEBI" id="CHEBI:29985"/>
    </ligand>
</feature>
<feature type="binding site" evidence="2">
    <location>
        <position position="295"/>
    </location>
    <ligand>
        <name>L-glutamate</name>
        <dbReference type="ChEBI" id="CHEBI:29985"/>
    </ligand>
</feature>
<feature type="binding site" evidence="2">
    <location>
        <position position="377"/>
    </location>
    <ligand>
        <name>L-glutamate</name>
        <dbReference type="ChEBI" id="CHEBI:29985"/>
    </ligand>
</feature>
<feature type="glycosylation site" description="N-linked (GlcNAc...) asparagine" evidence="2">
    <location>
        <position position="203"/>
    </location>
</feature>
<feature type="glycosylation site" description="N-linked (GlcNAc...) asparagine" evidence="2">
    <location>
        <position position="286"/>
    </location>
</feature>
<feature type="glycosylation site" description="N-linked (GlcNAc...) asparagine" evidence="4">
    <location>
        <position position="338"/>
    </location>
</feature>
<feature type="glycosylation site" description="N-linked (GlcNAc...) asparagine" evidence="4">
    <location>
        <position position="402"/>
    </location>
</feature>
<feature type="glycosylation site" description="N-linked (GlcNAc...) asparagine" evidence="4">
    <location>
        <position position="547"/>
    </location>
</feature>
<feature type="disulfide bond" evidence="2">
    <location>
        <begin position="50"/>
        <end position="92"/>
    </location>
</feature>
<feature type="disulfide bond" evidence="2">
    <location>
        <begin position="234"/>
        <end position="518"/>
    </location>
</feature>
<feature type="disulfide bond" evidence="2">
    <location>
        <begin position="355"/>
        <end position="362"/>
    </location>
</feature>
<feature type="disulfide bond" evidence="2">
    <location>
        <begin position="400"/>
        <end position="407"/>
    </location>
</feature>
<feature type="disulfide bond" evidence="2">
    <location>
        <begin position="500"/>
        <end position="519"/>
    </location>
</feature>
<feature type="disulfide bond" evidence="2">
    <location>
        <begin position="504"/>
        <end position="522"/>
    </location>
</feature>
<feature type="disulfide bond" evidence="2">
    <location>
        <begin position="525"/>
        <end position="537"/>
    </location>
</feature>
<feature type="disulfide bond" evidence="2">
    <location>
        <begin position="540"/>
        <end position="553"/>
    </location>
</feature>
<feature type="disulfide bond" evidence="2">
    <location>
        <begin position="632"/>
        <end position="721"/>
    </location>
</feature>
<organism>
    <name type="scientific">Rattus norvegicus</name>
    <name type="common">Rat</name>
    <dbReference type="NCBI Taxonomy" id="10116"/>
    <lineage>
        <taxon>Eukaryota</taxon>
        <taxon>Metazoa</taxon>
        <taxon>Chordata</taxon>
        <taxon>Craniata</taxon>
        <taxon>Vertebrata</taxon>
        <taxon>Euteleostomi</taxon>
        <taxon>Mammalia</taxon>
        <taxon>Eutheria</taxon>
        <taxon>Euarchontoglires</taxon>
        <taxon>Glires</taxon>
        <taxon>Rodentia</taxon>
        <taxon>Myomorpha</taxon>
        <taxon>Muroidea</taxon>
        <taxon>Muridae</taxon>
        <taxon>Murinae</taxon>
        <taxon>Rattus</taxon>
    </lineage>
</organism>
<sequence>MESLLGFLALLLLWGAVAEGPAKKVLTLEGDLVLGGLFPVHQKGGPAEECGPVNEHRGIQRLEAMLFALDRINRDPHLLPGVRLGAHILDSCSKDTHALEQALDFVRASLSRGADGSRHICPDGSYATHSDAPTAVTGVIGGSYSDVSIQVANLLRLFQIPQISYASTSAKLSDKSRYDYFARTVPPDFFQAKAMAEILRFFNWTYVSTVASEGDYGETGIEAFELEARARNICVATSEKVGRAMSRAAFEGVVRALLQKPSARVAVLFTRSEDARELLAATQRLNASFTWVASDGWGALESVVAGSERAAEGAITIELASYPISDFASYFQSLDPWNNSRNPWFREFWEERFHCSFRQRDCAAHSLRAVPFEQESKIMFVVNAVYAMAHALHNMHRALCPNTTHLCDAMRPVNGRRLYKDFVLNVKFDAPFRPADTDDEVRFDRFGDGIGRYNIFTYLRAGSGRYRYQKVGYWAEGLTLDTSFIPWASPSAGPLPASRCSEPCLQNEVKSVQPGEVCCWLCIPCQPYEYRLDEFTCADCGLGYWPNASLTGCFELPQEYIRWGDAWAVGPVTIACLGALATLFVLGVFVRHNATPVVKASGRELCYILLGGVFLCYCMTFVFIAKPSTAVCTLRRLGLGTAFSVCYSALLTKTNRIARIFGGAREGAQRPRFISPASQVAICLALISGQLLIVAAWLVVEAPGTGKETAPERREVVTLRCNHRDASMLGSLAYNVLLIALCTLYAFKTRKCPENFNEAKFIGFTMYTTCIIWLAFLPIFYVTSSDYRVQTTTMCVSVSLSGSVVLGCLFAPKLHIILFQPQKNVVSHRAPTSRFGSAAPRASANLGQGSGSQFVPTVCNGREVVDSTTSSL</sequence>
<dbReference type="EMBL" id="M92075">
    <property type="status" value="NOT_ANNOTATED_CDS"/>
    <property type="molecule type" value="mRNA"/>
</dbReference>
<dbReference type="PIR" id="JH0561">
    <property type="entry name" value="JH0561"/>
</dbReference>
<dbReference type="RefSeq" id="NP_001099181.1">
    <property type="nucleotide sequence ID" value="NM_001105711.1"/>
</dbReference>
<dbReference type="RefSeq" id="XP_017450945.1">
    <property type="nucleotide sequence ID" value="XM_017595456.1"/>
</dbReference>
<dbReference type="RefSeq" id="XP_017450946.1">
    <property type="nucleotide sequence ID" value="XM_017595457.1"/>
</dbReference>
<dbReference type="RefSeq" id="XP_063120964.1">
    <property type="nucleotide sequence ID" value="XM_063264894.1"/>
</dbReference>
<dbReference type="SMR" id="P31421"/>
<dbReference type="BioGRID" id="246580">
    <property type="interactions" value="3"/>
</dbReference>
<dbReference type="CORUM" id="P31421"/>
<dbReference type="DIP" id="DIP-41937N"/>
<dbReference type="FunCoup" id="P31421">
    <property type="interactions" value="2077"/>
</dbReference>
<dbReference type="IntAct" id="P31421">
    <property type="interactions" value="2"/>
</dbReference>
<dbReference type="MINT" id="P31421"/>
<dbReference type="STRING" id="10116.ENSRNOP00000017607"/>
<dbReference type="BindingDB" id="P31421"/>
<dbReference type="ChEMBL" id="CHEMBL2851"/>
<dbReference type="DrugCentral" id="P31421"/>
<dbReference type="GuidetoPHARMACOLOGY" id="290"/>
<dbReference type="GlyCosmos" id="P31421">
    <property type="glycosylation" value="5 sites, No reported glycans"/>
</dbReference>
<dbReference type="GlyGen" id="P31421">
    <property type="glycosylation" value="5 sites"/>
</dbReference>
<dbReference type="iPTMnet" id="P31421"/>
<dbReference type="PhosphoSitePlus" id="P31421"/>
<dbReference type="PaxDb" id="10116-ENSRNOP00000017607"/>
<dbReference type="Ensembl" id="ENSRNOT00000017607.4">
    <property type="protein sequence ID" value="ENSRNOP00000017607.2"/>
    <property type="gene ID" value="ENSRNOG00000013171.4"/>
</dbReference>
<dbReference type="GeneID" id="24415"/>
<dbReference type="KEGG" id="rno:24415"/>
<dbReference type="UCSC" id="RGD:2743">
    <property type="organism name" value="rat"/>
</dbReference>
<dbReference type="AGR" id="RGD:2743"/>
<dbReference type="CTD" id="2912"/>
<dbReference type="RGD" id="2743">
    <property type="gene designation" value="Grm2"/>
</dbReference>
<dbReference type="eggNOG" id="KOG1056">
    <property type="taxonomic scope" value="Eukaryota"/>
</dbReference>
<dbReference type="GeneTree" id="ENSGT01030000234595"/>
<dbReference type="HOGENOM" id="CLU_005389_0_0_1"/>
<dbReference type="InParanoid" id="P31421"/>
<dbReference type="OMA" id="HEKGNPT"/>
<dbReference type="OrthoDB" id="425344at2759"/>
<dbReference type="PhylomeDB" id="P31421"/>
<dbReference type="TreeFam" id="TF313240"/>
<dbReference type="Reactome" id="R-RNO-418594">
    <property type="pathway name" value="G alpha (i) signalling events"/>
</dbReference>
<dbReference type="Reactome" id="R-RNO-420499">
    <property type="pathway name" value="Class C/3 (Metabotropic glutamate/pheromone receptors)"/>
</dbReference>
<dbReference type="PRO" id="PR:P31421"/>
<dbReference type="Proteomes" id="UP000002494">
    <property type="component" value="Chromosome 8"/>
</dbReference>
<dbReference type="Bgee" id="ENSRNOG00000013171">
    <property type="expression patterns" value="Expressed in frontal cortex and 3 other cell types or tissues"/>
</dbReference>
<dbReference type="GO" id="GO:0097449">
    <property type="term" value="C:astrocyte projection"/>
    <property type="evidence" value="ECO:0000314"/>
    <property type="project" value="ARUK-UCL"/>
</dbReference>
<dbReference type="GO" id="GO:0030424">
    <property type="term" value="C:axon"/>
    <property type="evidence" value="ECO:0000314"/>
    <property type="project" value="UniProtKB"/>
</dbReference>
<dbReference type="GO" id="GO:0030425">
    <property type="term" value="C:dendrite"/>
    <property type="evidence" value="ECO:0007669"/>
    <property type="project" value="UniProtKB-SubCell"/>
</dbReference>
<dbReference type="GO" id="GO:0098978">
    <property type="term" value="C:glutamatergic synapse"/>
    <property type="evidence" value="ECO:0000266"/>
    <property type="project" value="RGD"/>
</dbReference>
<dbReference type="GO" id="GO:0043005">
    <property type="term" value="C:neuron projection"/>
    <property type="evidence" value="ECO:0000266"/>
    <property type="project" value="RGD"/>
</dbReference>
<dbReference type="GO" id="GO:0005886">
    <property type="term" value="C:plasma membrane"/>
    <property type="evidence" value="ECO:0000318"/>
    <property type="project" value="GO_Central"/>
</dbReference>
<dbReference type="GO" id="GO:0045211">
    <property type="term" value="C:postsynaptic membrane"/>
    <property type="evidence" value="ECO:0000266"/>
    <property type="project" value="RGD"/>
</dbReference>
<dbReference type="GO" id="GO:0042734">
    <property type="term" value="C:presynaptic membrane"/>
    <property type="evidence" value="ECO:0000314"/>
    <property type="project" value="UniProtKB"/>
</dbReference>
<dbReference type="GO" id="GO:0005246">
    <property type="term" value="F:calcium channel regulator activity"/>
    <property type="evidence" value="ECO:0000266"/>
    <property type="project" value="RGD"/>
</dbReference>
<dbReference type="GO" id="GO:0001641">
    <property type="term" value="F:group II metabotropic glutamate receptor activity"/>
    <property type="evidence" value="ECO:0000315"/>
    <property type="project" value="RGD"/>
</dbReference>
<dbReference type="GO" id="GO:0097110">
    <property type="term" value="F:scaffold protein binding"/>
    <property type="evidence" value="ECO:0000353"/>
    <property type="project" value="ARUK-UCL"/>
</dbReference>
<dbReference type="GO" id="GO:0035095">
    <property type="term" value="P:behavioral response to nicotine"/>
    <property type="evidence" value="ECO:0000315"/>
    <property type="project" value="RGD"/>
</dbReference>
<dbReference type="GO" id="GO:0033554">
    <property type="term" value="P:cellular response to stress"/>
    <property type="evidence" value="ECO:0000266"/>
    <property type="project" value="RGD"/>
</dbReference>
<dbReference type="GO" id="GO:0007216">
    <property type="term" value="P:G protein-coupled glutamate receptor signaling pathway"/>
    <property type="evidence" value="ECO:0000318"/>
    <property type="project" value="GO_Central"/>
</dbReference>
<dbReference type="GO" id="GO:0010467">
    <property type="term" value="P:gene expression"/>
    <property type="evidence" value="ECO:0000266"/>
    <property type="project" value="RGD"/>
</dbReference>
<dbReference type="GO" id="GO:0007215">
    <property type="term" value="P:glutamate receptor signaling pathway"/>
    <property type="evidence" value="ECO:0000315"/>
    <property type="project" value="ARUK-UCL"/>
</dbReference>
<dbReference type="GO" id="GO:0014047">
    <property type="term" value="P:glutamate secretion"/>
    <property type="evidence" value="ECO:0000314"/>
    <property type="project" value="UniProtKB"/>
</dbReference>
<dbReference type="GO" id="GO:0090461">
    <property type="term" value="P:intracellular glutamate homeostasis"/>
    <property type="evidence" value="ECO:0000266"/>
    <property type="project" value="RGD"/>
</dbReference>
<dbReference type="GO" id="GO:0060292">
    <property type="term" value="P:long-term synaptic depression"/>
    <property type="evidence" value="ECO:0000266"/>
    <property type="project" value="RGD"/>
</dbReference>
<dbReference type="GO" id="GO:0051897">
    <property type="term" value="P:positive regulation of phosphatidylinositol 3-kinase/protein kinase B signal transduction"/>
    <property type="evidence" value="ECO:0000315"/>
    <property type="project" value="ARUK-UCL"/>
</dbReference>
<dbReference type="GO" id="GO:0099171">
    <property type="term" value="P:presynaptic modulation of chemical synaptic transmission"/>
    <property type="evidence" value="ECO:0000266"/>
    <property type="project" value="RGD"/>
</dbReference>
<dbReference type="GO" id="GO:0014059">
    <property type="term" value="P:regulation of dopamine secretion"/>
    <property type="evidence" value="ECO:0000315"/>
    <property type="project" value="RGD"/>
</dbReference>
<dbReference type="GO" id="GO:0014048">
    <property type="term" value="P:regulation of glutamate secretion"/>
    <property type="evidence" value="ECO:0000315"/>
    <property type="project" value="RGD"/>
</dbReference>
<dbReference type="GO" id="GO:0046928">
    <property type="term" value="P:regulation of neurotransmitter secretion"/>
    <property type="evidence" value="ECO:0000303"/>
    <property type="project" value="UniProtKB"/>
</dbReference>
<dbReference type="GO" id="GO:2001023">
    <property type="term" value="P:regulation of response to drug"/>
    <property type="evidence" value="ECO:0000315"/>
    <property type="project" value="RGD"/>
</dbReference>
<dbReference type="GO" id="GO:0051966">
    <property type="term" value="P:regulation of synaptic transmission, glutamatergic"/>
    <property type="evidence" value="ECO:0000318"/>
    <property type="project" value="GO_Central"/>
</dbReference>
<dbReference type="GO" id="GO:0042220">
    <property type="term" value="P:response to cocaine"/>
    <property type="evidence" value="ECO:0000315"/>
    <property type="project" value="RGD"/>
</dbReference>
<dbReference type="CDD" id="cd15447">
    <property type="entry name" value="7tmC_mGluR2"/>
    <property type="match status" value="1"/>
</dbReference>
<dbReference type="CDD" id="cd06375">
    <property type="entry name" value="PBP1_mGluR_groupII"/>
    <property type="match status" value="1"/>
</dbReference>
<dbReference type="FunFam" id="3.40.50.2300:FF:001113">
    <property type="match status" value="1"/>
</dbReference>
<dbReference type="FunFam" id="3.40.50.2300:FF:001127">
    <property type="match status" value="1"/>
</dbReference>
<dbReference type="FunFam" id="2.10.50.30:FF:000001">
    <property type="entry name" value="metabotropic glutamate receptor 1"/>
    <property type="match status" value="1"/>
</dbReference>
<dbReference type="FunFam" id="3.40.50.2300:FF:000029">
    <property type="entry name" value="Metabotropic glutamate receptor 3"/>
    <property type="match status" value="1"/>
</dbReference>
<dbReference type="Gene3D" id="3.40.50.2300">
    <property type="match status" value="2"/>
</dbReference>
<dbReference type="Gene3D" id="2.10.50.30">
    <property type="entry name" value="GPCR, family 3, nine cysteines domain"/>
    <property type="match status" value="1"/>
</dbReference>
<dbReference type="InterPro" id="IPR001828">
    <property type="entry name" value="ANF_lig-bd_rcpt"/>
</dbReference>
<dbReference type="InterPro" id="IPR000337">
    <property type="entry name" value="GPCR_3"/>
</dbReference>
<dbReference type="InterPro" id="IPR011500">
    <property type="entry name" value="GPCR_3_9-Cys_dom"/>
</dbReference>
<dbReference type="InterPro" id="IPR038550">
    <property type="entry name" value="GPCR_3_9-Cys_sf"/>
</dbReference>
<dbReference type="InterPro" id="IPR017978">
    <property type="entry name" value="GPCR_3_C"/>
</dbReference>
<dbReference type="InterPro" id="IPR017979">
    <property type="entry name" value="GPCR_3_CS"/>
</dbReference>
<dbReference type="InterPro" id="IPR001458">
    <property type="entry name" value="GPCR_3_mGluR2"/>
</dbReference>
<dbReference type="InterPro" id="IPR000162">
    <property type="entry name" value="GPCR_3_mtglu_rcpt"/>
</dbReference>
<dbReference type="InterPro" id="IPR050726">
    <property type="entry name" value="mGluR"/>
</dbReference>
<dbReference type="InterPro" id="IPR028082">
    <property type="entry name" value="Peripla_BP_I"/>
</dbReference>
<dbReference type="PANTHER" id="PTHR24060">
    <property type="entry name" value="METABOTROPIC GLUTAMATE RECEPTOR"/>
    <property type="match status" value="1"/>
</dbReference>
<dbReference type="Pfam" id="PF00003">
    <property type="entry name" value="7tm_3"/>
    <property type="match status" value="1"/>
</dbReference>
<dbReference type="Pfam" id="PF01094">
    <property type="entry name" value="ANF_receptor"/>
    <property type="match status" value="1"/>
</dbReference>
<dbReference type="Pfam" id="PF07562">
    <property type="entry name" value="NCD3G"/>
    <property type="match status" value="1"/>
</dbReference>
<dbReference type="PRINTS" id="PR00248">
    <property type="entry name" value="GPCRMGR"/>
</dbReference>
<dbReference type="PRINTS" id="PR01052">
    <property type="entry name" value="MTABOTROPC2R"/>
</dbReference>
<dbReference type="PRINTS" id="PR00593">
    <property type="entry name" value="MTABOTROPICR"/>
</dbReference>
<dbReference type="SUPFAM" id="SSF53822">
    <property type="entry name" value="Periplasmic binding protein-like I"/>
    <property type="match status" value="1"/>
</dbReference>
<dbReference type="PROSITE" id="PS00979">
    <property type="entry name" value="G_PROTEIN_RECEP_F3_1"/>
    <property type="match status" value="1"/>
</dbReference>
<dbReference type="PROSITE" id="PS00980">
    <property type="entry name" value="G_PROTEIN_RECEP_F3_2"/>
    <property type="match status" value="1"/>
</dbReference>
<dbReference type="PROSITE" id="PS00981">
    <property type="entry name" value="G_PROTEIN_RECEP_F3_3"/>
    <property type="match status" value="1"/>
</dbReference>
<dbReference type="PROSITE" id="PS50259">
    <property type="entry name" value="G_PROTEIN_RECEP_F3_4"/>
    <property type="match status" value="1"/>
</dbReference>
<comment type="function">
    <text evidence="2 3">Dimeric G protein-coupled receptor which is activated by the excitatory neurotransmitter L-glutamate (By similarity). Plays critical roles in modulating synaptic transmission and neuronal excitability. Upon activation by glutamate, inhibits presynaptic calcium channels, reducing further glutamate release and dampening excitatory signaling (By similarity). Mechanistically, ligand binding causes a conformation change that triggers signaling via guanine nucleotide-binding proteins (G proteins) and modulates the activity of down-stream effectors, such as adenylate cyclase. May mediate suppression of neurotransmission or may be involved in synaptogenesis or synaptic stabilization (By similarity).</text>
</comment>
<comment type="subunit">
    <text evidence="1 2">Forms heterodimers with GRM3 or GRM4. Interacts with GNAI1 (By similarity). Interacts with TAMALIN (PubMed:11850456). Interacts with HTR2A (By similarity).</text>
</comment>
<comment type="interaction">
    <interactant intactId="EBI-7090147">
        <id>P31421</id>
    </interactant>
    <interactant intactId="EBI-7090176">
        <id>P14842</id>
        <label>Htr2a</label>
    </interactant>
    <organismsDiffer>false</organismsDiffer>
    <experiments>3</experiments>
</comment>
<comment type="interaction">
    <interactant intactId="EBI-7090147">
        <id>P31421</id>
    </interactant>
    <interactant intactId="EBI-636085">
        <id>Q96S59</id>
        <label>RANBP9</label>
    </interactant>
    <organismsDiffer>true</organismsDiffer>
    <experiments>4</experiments>
</comment>
<comment type="subcellular location">
    <subcellularLocation>
        <location>Cell membrane</location>
        <topology>Multi-pass membrane protein</topology>
    </subcellularLocation>
    <subcellularLocation>
        <location evidence="1">Synapse</location>
    </subcellularLocation>
    <subcellularLocation>
        <location evidence="1">Cell projection</location>
        <location evidence="1">Dendrite</location>
    </subcellularLocation>
</comment>
<comment type="tissue specificity">
    <text>Is widely distributed in the CNS and prominent expression is seen in Golgi cells of the cerebellum and some particular neuronal cells in other brain regions.</text>
</comment>
<comment type="similarity">
    <text evidence="5">Belongs to the G-protein coupled receptor 3 family.</text>
</comment>
<proteinExistence type="evidence at protein level"/>